<protein>
    <recommendedName>
        <fullName evidence="10">Subtilisin-like protease 2</fullName>
        <ecNumber evidence="11">3.4.21.62</ecNumber>
    </recommendedName>
    <alternativeName>
        <fullName evidence="9">Merozoite surface sheddase</fullName>
        <shortName evidence="9">MESH</shortName>
    </alternativeName>
    <alternativeName>
        <fullName evidence="8">PfSUB2</fullName>
    </alternativeName>
</protein>
<reference evidence="12" key="1">
    <citation type="journal article" date="1999" name="Mol. Biochem. Parasitol.">
        <title>PfSUB-2: a second subtilisin-like protein in Plasmodium falciparum merozoites.</title>
        <authorList>
            <person name="Hackett F."/>
            <person name="Sajid M."/>
            <person name="Martinez-Withers C."/>
            <person name="Blackman M.J."/>
        </authorList>
    </citation>
    <scope>NUCLEOTIDE SEQUENCE [GENOMIC DNA]</scope>
    <scope>SUBCELLULAR LOCATION</scope>
    <scope>DEVELOPMENTAL STAGE</scope>
    <scope>PROTEOLYTIC CLEAVAGE</scope>
    <source>
        <strain evidence="12">T9/96</strain>
    </source>
</reference>
<reference evidence="10" key="2">
    <citation type="journal article" date="2005" name="PLoS Pathog.">
        <title>Molecular identification of a malaria merozoite surface sheddase.</title>
        <authorList>
            <person name="Harris P.K."/>
            <person name="Yeoh S."/>
            <person name="Dluzewski A.R."/>
            <person name="O'Donnell R.A."/>
            <person name="Withers-Martinez C."/>
            <person name="Hackett F."/>
            <person name="Bannister L.H."/>
            <person name="Mitchell G.H."/>
            <person name="Blackman M.J."/>
        </authorList>
    </citation>
    <scope>FUNCTION</scope>
    <scope>CATALYTIC ACTIVITY</scope>
    <scope>ACTIVITY REGULATION</scope>
    <scope>SUBCELLULAR LOCATION</scope>
    <scope>DOMAIN</scope>
    <scope>PROTEOLYTIC CLEAVAGE</scope>
</reference>
<reference evidence="13" key="3">
    <citation type="journal article" date="2012" name="Proteins">
        <title>Solution NMR structure of a sheddase inhibitor prodomain from the malarial parasite Plasmodium falciparum.</title>
        <authorList>
            <person name="He Y."/>
            <person name="Chen Y."/>
            <person name="Oganesyan N."/>
            <person name="Ruan B."/>
            <person name="O'Brochta D."/>
            <person name="Bryan P.N."/>
            <person name="Orban J."/>
        </authorList>
    </citation>
    <scope>STRUCTURE BY NMR OF 530-676</scope>
</reference>
<accession>O97364</accession>
<name>SUB2_PLAFA</name>
<comment type="function">
    <text evidence="1 7">Serine protease which plays an essential role in the shedding of AMA1, MSP1 and MSP7 from the surface of the invading merozoite; this step is essential for productive invasion and the release of the adhesion between the erythrocyte and the merozoite (PubMed:16322767). May cleave TRAMP/PTTRAMP, thereby shedding TRAMP from the merozoite surface during erythrocyte invasion (By similarity).</text>
</comment>
<comment type="catalytic activity">
    <reaction evidence="11">
        <text>Hydrolysis of proteins with broad specificity for peptide bonds, and a preference for a large uncharged residue in P1. Hydrolyzes peptide amides.</text>
        <dbReference type="EC" id="3.4.21.62"/>
    </reaction>
</comment>
<comment type="activity regulation">
    <text evidence="7">Activation may be calcium-dependent (PubMed:16322767). Inhibited by the non-covalent interaction with the cleaved propeptide (PubMed:16322767).</text>
</comment>
<comment type="subcellular location">
    <subcellularLocation>
        <location evidence="6 7">Cell membrane</location>
        <topology evidence="10">Single-pass type I membrane protein</topology>
    </subcellularLocation>
    <subcellularLocation>
        <location evidence="7">Cytoplasmic vesicle</location>
        <location evidence="7">Secretory vesicle</location>
        <location evidence="7">Microneme membrane</location>
        <topology evidence="10">Single-pass type I membrane protein</topology>
    </subcellularLocation>
    <text evidence="6 7">In mature schizonts, localizes to micronemes at the merozoite apical region (PubMed:10551362, PubMed:16322767). Immediately after schizont rupture, secreted from the micronemes to the merozoite surface where it redistributes in an actin-dependent manner to accumulate at the posterior end of newly released merozoites (PubMed:16322767).</text>
</comment>
<comment type="developmental stage">
    <text evidence="6">Expressed during the parasite blood stage, specifically in schizonts and merozoites (at protein level).</text>
</comment>
<comment type="domain">
    <text evidence="7">The propeptide domain acts as an intramolecular chaperone for the folding of the catalytic domain (PubMed:16322767). Also acts as an inhibitor of the catalytic domain thereby regulating SUB2 activity during secretion (PubMed:16322767).</text>
</comment>
<comment type="domain">
    <text evidence="1">The transmembrane domain is required for SUB2 progression through the secretory pathway.</text>
</comment>
<comment type="domain">
    <text evidence="1">The cytoplasmic domain is required for the correct redistribution at the merozoite surface and posterior capping but is dispensable for its progression through the secretory pathway.</text>
</comment>
<comment type="PTM">
    <text evidence="1 6 7">Proteolytically cleaved at the N-terminus to generate a 74kDa intermediate which is further processed into a 72kDa form (PubMed:10551362, PubMed:16322767). The first maturation cleavage is autocatalytic, occurs in the ER and is necessary for the subsequent SUB2 trafficking to the microneme (By similarity). The second cleavage may be mediated by PMX/plasmepsin X (By similarity).</text>
</comment>
<comment type="similarity">
    <text evidence="4">Belongs to the peptidase S8 family.</text>
</comment>
<keyword id="KW-0002">3D-structure</keyword>
<keyword id="KW-0068">Autocatalytic cleavage</keyword>
<keyword id="KW-1003">Cell membrane</keyword>
<keyword id="KW-0968">Cytoplasmic vesicle</keyword>
<keyword id="KW-0325">Glycoprotein</keyword>
<keyword id="KW-0378">Hydrolase</keyword>
<keyword id="KW-0472">Membrane</keyword>
<keyword id="KW-0645">Protease</keyword>
<keyword id="KW-0720">Serine protease</keyword>
<keyword id="KW-0732">Signal</keyword>
<keyword id="KW-0812">Transmembrane</keyword>
<keyword id="KW-1133">Transmembrane helix</keyword>
<keyword id="KW-0865">Zymogen</keyword>
<organism evidence="12">
    <name type="scientific">Plasmodium falciparum</name>
    <dbReference type="NCBI Taxonomy" id="5833"/>
    <lineage>
        <taxon>Eukaryota</taxon>
        <taxon>Sar</taxon>
        <taxon>Alveolata</taxon>
        <taxon>Apicomplexa</taxon>
        <taxon>Aconoidasida</taxon>
        <taxon>Haemosporida</taxon>
        <taxon>Plasmodiidae</taxon>
        <taxon>Plasmodium</taxon>
        <taxon>Plasmodium (Laverania)</taxon>
    </lineage>
</organism>
<gene>
    <name evidence="8" type="primary">SUB2</name>
</gene>
<proteinExistence type="evidence at protein level"/>
<evidence type="ECO:0000250" key="1">
    <source>
        <dbReference type="UniProtKB" id="Q8IHZ5"/>
    </source>
</evidence>
<evidence type="ECO:0000255" key="2"/>
<evidence type="ECO:0000255" key="3">
    <source>
        <dbReference type="PROSITE-ProRule" id="PRU00498"/>
    </source>
</evidence>
<evidence type="ECO:0000255" key="4">
    <source>
        <dbReference type="PROSITE-ProRule" id="PRU01240"/>
    </source>
</evidence>
<evidence type="ECO:0000256" key="5">
    <source>
        <dbReference type="SAM" id="MobiDB-lite"/>
    </source>
</evidence>
<evidence type="ECO:0000269" key="6">
    <source>
    </source>
</evidence>
<evidence type="ECO:0000269" key="7">
    <source>
    </source>
</evidence>
<evidence type="ECO:0000303" key="8">
    <source>
    </source>
</evidence>
<evidence type="ECO:0000303" key="9">
    <source>
    </source>
</evidence>
<evidence type="ECO:0000305" key="10"/>
<evidence type="ECO:0000305" key="11">
    <source>
    </source>
</evidence>
<evidence type="ECO:0000312" key="12">
    <source>
        <dbReference type="EMBL" id="CAB37326.1"/>
    </source>
</evidence>
<evidence type="ECO:0007744" key="13">
    <source>
        <dbReference type="PDB" id="2LU1"/>
    </source>
</evidence>
<evidence type="ECO:0007829" key="14">
    <source>
        <dbReference type="PDB" id="2LU1"/>
    </source>
</evidence>
<sequence length="1342" mass="154932">MLNIIYVVSLILIKFIFYKECNNNNNYYLSNIELYNYKLRKRNRILNNNINDRKSFLSDLEQNYKPLFDIYELSANFEKRRKELEKKTKGEENEIEKKKENDLEEKKENEIEKKKENDLEKEYNDVINLLELSLSSEYKELNADVSNNDNSGHEENNKHKLNKKNSSNYKNDKSLDELIKGAILKLKQNPNIKNKNMLDYDKIFKIIKEKLINKNLASNKIKGGDNEKLKEEKKQSDISTNVEVKKDIINDQLNKGIPTKIENKDDMINKESNKEDITNEGKSNSLNNLNTLNNDGNIITKVYDHYTIVTNSNDILNDISIDASDISKNSIGGINIPFNENDNSSFTHQRYIVLSNNGEKKYKIVLMTKNPKFMDMDGIYDEEEKKESLIELNQKVNKEENTNLYDGTGTLYYGKKSKKEKENTQQKGGNNPNVDINILNNNNNNNNNNNNNSNNNSNSMNDEEINYNNNNNKESPSMFRRFINFLSFSGNENETEDTLIYHNKNDNSYKNKKEGTGKNNDNNDPNNNNNKKILLNVDKLVDQYLLNLKNNHTSKQELILVLKGELDLHSKNMKNVINNAKKNLEKYFKEHFKEFDKISYDISTPINFLCIFIPTLFDMNNMDLLKQALLILHNDLHEYVENWSFSSTYHTYEADYIKEQDSVYDRSPKKKYIKASKKLYNNKYSFLNKFLNIEPLILFAKKLNSKRSNIEKEILNFLPKELRDYSTWNLSIIRVFNAWFLAGYGNKNVKVCVVDSGADIKHVDLNGNLYIPEYNEKYEMTQDFYNFMVKNPTDASGHGTHVTGIIGGVANDLGVVGVAPNITLISLRFIDGKKYGGSFHAIKALNVCILNKAPIINASWGSSHFDVNLHLAVERLKYTLNGKGSVLIAASGNKSNDNDISPLYPATFTFPHVYSVASISRNFEISPFSNYGHKSVHILAPGHHIYSTIPNNSYKIFTGTSMAAPHVCGVSALVYSVCYNQGFIPQAEEVLDILTRTSIKIISTKKRTINDSLVNAEGAVLTTLLGGLWMQMDCYFVKFNLEKGKKKHIPVVFSAYKKGVYETDIVIAIIPIDGKSKIYGEIHIPIKIVTDVNIPNFQESPRRGKNYTIDSNEAQHDEVLSYICENALYNLYEYDSHYLLASVILFFLALLSIFVGMIYMKSRKHSDKKCSKNLMKSNYIPEMDDGMEETQQLQQERRQYFRELFGENLEKNYDQHFVQDFGQDFRQDFKLGSTPDLKQYSDIDLQNKIQQPERKTVKIIINNFEDRKKETKRRLLKGLNYDGENAKKHDFTNESISNSRKNFKFSNNTEMKKNTIKSEDVKIASDDNVNKAMNQLDDMFMK</sequence>
<dbReference type="EC" id="3.4.21.62" evidence="11"/>
<dbReference type="EMBL" id="AJ132422">
    <property type="protein sequence ID" value="CAB37326.1"/>
    <property type="molecule type" value="Genomic_DNA"/>
</dbReference>
<dbReference type="PDB" id="2LU1">
    <property type="method" value="NMR"/>
    <property type="chains" value="A=530-676"/>
</dbReference>
<dbReference type="PDBsum" id="2LU1"/>
<dbReference type="SMR" id="O97364"/>
<dbReference type="MEROPS" id="S08.013"/>
<dbReference type="GlyCosmos" id="O97364">
    <property type="glycosylation" value="14 sites, No reported glycans"/>
</dbReference>
<dbReference type="VEuPathDB" id="PlasmoDB:PF3D7_1136900"/>
<dbReference type="VEuPathDB" id="PlasmoDB:Pf7G8-2_000359700"/>
<dbReference type="VEuPathDB" id="PlasmoDB:Pf7G8_110040700"/>
<dbReference type="VEuPathDB" id="PlasmoDB:PfCD01_110042300"/>
<dbReference type="VEuPathDB" id="PlasmoDB:PfDd2_110040100"/>
<dbReference type="VEuPathDB" id="PlasmoDB:PfGA01_110041100"/>
<dbReference type="VEuPathDB" id="PlasmoDB:PfGB4_110043400"/>
<dbReference type="VEuPathDB" id="PlasmoDB:PfGN01_110041400"/>
<dbReference type="VEuPathDB" id="PlasmoDB:PfHB3_110040300"/>
<dbReference type="VEuPathDB" id="PlasmoDB:PfIT_110041400"/>
<dbReference type="VEuPathDB" id="PlasmoDB:PfKE01_110041400"/>
<dbReference type="VEuPathDB" id="PlasmoDB:PfKH01_110041200"/>
<dbReference type="VEuPathDB" id="PlasmoDB:PfKH02_110042100"/>
<dbReference type="VEuPathDB" id="PlasmoDB:PfML01_110041700"/>
<dbReference type="VEuPathDB" id="PlasmoDB:PfNF135_110040000"/>
<dbReference type="VEuPathDB" id="PlasmoDB:PfNF166_110040200"/>
<dbReference type="VEuPathDB" id="PlasmoDB:PfNF54_110041100"/>
<dbReference type="VEuPathDB" id="PlasmoDB:PfSD01_110039500"/>
<dbReference type="VEuPathDB" id="PlasmoDB:PfSN01_110040000"/>
<dbReference type="VEuPathDB" id="PlasmoDB:PfTG01_110041300"/>
<dbReference type="EvolutionaryTrace" id="O97364"/>
<dbReference type="GO" id="GO:0031410">
    <property type="term" value="C:cytoplasmic vesicle"/>
    <property type="evidence" value="ECO:0007669"/>
    <property type="project" value="UniProtKB-KW"/>
</dbReference>
<dbReference type="GO" id="GO:0033163">
    <property type="term" value="C:microneme membrane"/>
    <property type="evidence" value="ECO:0000314"/>
    <property type="project" value="UniProtKB"/>
</dbReference>
<dbReference type="GO" id="GO:0005886">
    <property type="term" value="C:plasma membrane"/>
    <property type="evidence" value="ECO:0000314"/>
    <property type="project" value="UniProtKB"/>
</dbReference>
<dbReference type="GO" id="GO:0004252">
    <property type="term" value="F:serine-type endopeptidase activity"/>
    <property type="evidence" value="ECO:0007669"/>
    <property type="project" value="UniProtKB-EC"/>
</dbReference>
<dbReference type="GO" id="GO:0006509">
    <property type="term" value="P:membrane protein ectodomain proteolysis"/>
    <property type="evidence" value="ECO:0000315"/>
    <property type="project" value="UniProtKB"/>
</dbReference>
<dbReference type="FunFam" id="3.40.50.200:FF:000024">
    <property type="entry name" value="Subtilisin-like protease 2"/>
    <property type="match status" value="1"/>
</dbReference>
<dbReference type="Gene3D" id="3.30.70.2370">
    <property type="match status" value="1"/>
</dbReference>
<dbReference type="Gene3D" id="3.40.50.200">
    <property type="entry name" value="Peptidase S8/S53 domain"/>
    <property type="match status" value="1"/>
</dbReference>
<dbReference type="InterPro" id="IPR000209">
    <property type="entry name" value="Peptidase_S8/S53_dom"/>
</dbReference>
<dbReference type="InterPro" id="IPR036852">
    <property type="entry name" value="Peptidase_S8/S53_dom_sf"/>
</dbReference>
<dbReference type="InterPro" id="IPR051048">
    <property type="entry name" value="Peptidase_S8/S53_subtilisin"/>
</dbReference>
<dbReference type="InterPro" id="IPR022398">
    <property type="entry name" value="Peptidase_S8_His-AS"/>
</dbReference>
<dbReference type="InterPro" id="IPR023828">
    <property type="entry name" value="Peptidase_S8_Ser-AS"/>
</dbReference>
<dbReference type="InterPro" id="IPR015500">
    <property type="entry name" value="Peptidase_S8_subtilisin-rel"/>
</dbReference>
<dbReference type="InterPro" id="IPR040935">
    <property type="entry name" value="Pro_sub2"/>
</dbReference>
<dbReference type="PANTHER" id="PTHR43399:SF4">
    <property type="entry name" value="CELL WALL-ASSOCIATED PROTEASE"/>
    <property type="match status" value="1"/>
</dbReference>
<dbReference type="PANTHER" id="PTHR43399">
    <property type="entry name" value="SUBTILISIN-RELATED"/>
    <property type="match status" value="1"/>
</dbReference>
<dbReference type="Pfam" id="PF00082">
    <property type="entry name" value="Peptidase_S8"/>
    <property type="match status" value="1"/>
</dbReference>
<dbReference type="Pfam" id="PF18513">
    <property type="entry name" value="Pro_sub2"/>
    <property type="match status" value="1"/>
</dbReference>
<dbReference type="PRINTS" id="PR00723">
    <property type="entry name" value="SUBTILISIN"/>
</dbReference>
<dbReference type="SUPFAM" id="SSF52743">
    <property type="entry name" value="Subtilisin-like"/>
    <property type="match status" value="1"/>
</dbReference>
<dbReference type="PROSITE" id="PS51892">
    <property type="entry name" value="SUBTILASE"/>
    <property type="match status" value="1"/>
</dbReference>
<dbReference type="PROSITE" id="PS00137">
    <property type="entry name" value="SUBTILASE_HIS"/>
    <property type="match status" value="1"/>
</dbReference>
<dbReference type="PROSITE" id="PS00138">
    <property type="entry name" value="SUBTILASE_SER"/>
    <property type="match status" value="1"/>
</dbReference>
<feature type="signal peptide" evidence="2">
    <location>
        <begin position="1"/>
        <end position="18"/>
    </location>
</feature>
<feature type="propeptide" id="PRO_0000450751" description="Inhibition peptide" evidence="11">
    <location>
        <begin position="19"/>
        <end position="687"/>
    </location>
</feature>
<feature type="chain" id="PRO_5005692366" description="Subtilisin-like protease 2" evidence="11">
    <location>
        <begin position="688"/>
        <end position="1342"/>
    </location>
</feature>
<feature type="topological domain" description="Extracellular" evidence="10">
    <location>
        <begin position="688"/>
        <end position="1137"/>
    </location>
</feature>
<feature type="transmembrane region" description="Helical" evidence="2">
    <location>
        <begin position="1138"/>
        <end position="1158"/>
    </location>
</feature>
<feature type="topological domain" description="Cytoplasmic" evidence="10">
    <location>
        <begin position="1159"/>
        <end position="1342"/>
    </location>
</feature>
<feature type="domain" description="Peptidase S8" evidence="4">
    <location>
        <begin position="727"/>
        <end position="1020"/>
    </location>
</feature>
<feature type="region of interest" description="Disordered" evidence="5">
    <location>
        <begin position="85"/>
        <end position="111"/>
    </location>
</feature>
<feature type="region of interest" description="Disordered" evidence="5">
    <location>
        <begin position="143"/>
        <end position="171"/>
    </location>
</feature>
<feature type="region of interest" description="Disordered" evidence="5">
    <location>
        <begin position="415"/>
        <end position="474"/>
    </location>
</feature>
<feature type="region of interest" description="Disordered" evidence="5">
    <location>
        <begin position="500"/>
        <end position="531"/>
    </location>
</feature>
<feature type="compositionally biased region" description="Low complexity" evidence="5">
    <location>
        <begin position="430"/>
        <end position="474"/>
    </location>
</feature>
<feature type="compositionally biased region" description="Basic and acidic residues" evidence="5">
    <location>
        <begin position="503"/>
        <end position="516"/>
    </location>
</feature>
<feature type="compositionally biased region" description="Low complexity" evidence="5">
    <location>
        <begin position="518"/>
        <end position="531"/>
    </location>
</feature>
<feature type="active site" description="Charge relay system" evidence="4">
    <location>
        <position position="755"/>
    </location>
</feature>
<feature type="active site" description="Charge relay system" evidence="4">
    <location>
        <position position="798"/>
    </location>
</feature>
<feature type="active site" description="Charge relay system" evidence="4">
    <location>
        <position position="961"/>
    </location>
</feature>
<feature type="glycosylation site" description="N-linked (GlcNAc...) asparagine" evidence="3">
    <location>
        <position position="165"/>
    </location>
</feature>
<feature type="glycosylation site" description="N-linked (GlcNAc...) asparagine" evidence="3">
    <location>
        <position position="343"/>
    </location>
</feature>
<feature type="glycosylation site" description="N-linked (GlcNAc...) asparagine" evidence="3">
    <location>
        <position position="451"/>
    </location>
</feature>
<feature type="glycosylation site" description="N-linked (GlcNAc...) asparagine" evidence="3">
    <location>
        <position position="455"/>
    </location>
</feature>
<feature type="glycosylation site" description="N-linked (GlcNAc...) asparagine" evidence="3">
    <location>
        <position position="493"/>
    </location>
</feature>
<feature type="glycosylation site" description="N-linked (GlcNAc...) asparagine" evidence="3">
    <location>
        <position position="551"/>
    </location>
</feature>
<feature type="glycosylation site" description="N-linked (GlcNAc...) asparagine" evidence="3">
    <location>
        <position position="642"/>
    </location>
</feature>
<feature type="glycosylation site" description="N-linked (GlcNAc...) asparagine" evidence="3">
    <location>
        <position position="729"/>
    </location>
</feature>
<feature type="glycosylation site" description="N-linked (GlcNAc...) asparagine" evidence="3">
    <location>
        <position position="821"/>
    </location>
</feature>
<feature type="glycosylation site" description="N-linked (GlcNAc...) asparagine" evidence="3">
    <location>
        <position position="857"/>
    </location>
</feature>
<feature type="glycosylation site" description="N-linked (GlcNAc...) asparagine" evidence="3">
    <location>
        <position position="893"/>
    </location>
</feature>
<feature type="glycosylation site" description="N-linked (GlcNAc...) asparagine" evidence="3">
    <location>
        <position position="951"/>
    </location>
</feature>
<feature type="glycosylation site" description="N-linked (GlcNAc...) asparagine" evidence="3">
    <location>
        <position position="1010"/>
    </location>
</feature>
<feature type="glycosylation site" description="N-linked (GlcNAc...) asparagine" evidence="3">
    <location>
        <position position="1106"/>
    </location>
</feature>
<feature type="strand" evidence="14">
    <location>
        <begin position="554"/>
        <end position="560"/>
    </location>
</feature>
<feature type="helix" evidence="14">
    <location>
        <begin position="571"/>
        <end position="590"/>
    </location>
</feature>
<feature type="strand" evidence="14">
    <location>
        <begin position="591"/>
        <end position="593"/>
    </location>
</feature>
<feature type="strand" evidence="14">
    <location>
        <begin position="599"/>
        <end position="603"/>
    </location>
</feature>
<feature type="turn" evidence="14">
    <location>
        <begin position="604"/>
        <end position="607"/>
    </location>
</feature>
<feature type="strand" evidence="14">
    <location>
        <begin position="608"/>
        <end position="615"/>
    </location>
</feature>
<feature type="helix" evidence="14">
    <location>
        <begin position="625"/>
        <end position="637"/>
    </location>
</feature>